<reference key="1">
    <citation type="journal article" date="2005" name="Nucleic Acids Res.">
        <title>Genome dynamics and diversity of Shigella species, the etiologic agents of bacillary dysentery.</title>
        <authorList>
            <person name="Yang F."/>
            <person name="Yang J."/>
            <person name="Zhang X."/>
            <person name="Chen L."/>
            <person name="Jiang Y."/>
            <person name="Yan Y."/>
            <person name="Tang X."/>
            <person name="Wang J."/>
            <person name="Xiong Z."/>
            <person name="Dong J."/>
            <person name="Xue Y."/>
            <person name="Zhu Y."/>
            <person name="Xu X."/>
            <person name="Sun L."/>
            <person name="Chen S."/>
            <person name="Nie H."/>
            <person name="Peng J."/>
            <person name="Xu J."/>
            <person name="Wang Y."/>
            <person name="Yuan Z."/>
            <person name="Wen Y."/>
            <person name="Yao Z."/>
            <person name="Shen Y."/>
            <person name="Qiang B."/>
            <person name="Hou Y."/>
            <person name="Yu J."/>
            <person name="Jin Q."/>
        </authorList>
    </citation>
    <scope>NUCLEOTIDE SEQUENCE [LARGE SCALE GENOMIC DNA]</scope>
    <source>
        <strain>Sb227</strain>
    </source>
</reference>
<sequence>MTLKELLVGFGTQVRSIWMIGLHAFAKRETRMYPEEPVYLPPRYRGRIVLTRDPDGEERCVACNLCAVACPVGCISLQKAETKDGRWYPEFFRINFSRCIFCGLCEEACPTTAIQLTPDFEMGEYKRQDLVYEKEDLLISGPGKYPEYNFYRMAGMAIDGKDKGEAENEAKPIDVKSLLP</sequence>
<proteinExistence type="inferred from homology"/>
<protein>
    <recommendedName>
        <fullName evidence="1">NADH-quinone oxidoreductase subunit I</fullName>
        <ecNumber evidence="1">7.1.1.-</ecNumber>
    </recommendedName>
    <alternativeName>
        <fullName evidence="1">NADH dehydrogenase I subunit I</fullName>
    </alternativeName>
    <alternativeName>
        <fullName evidence="1">NDH-1 subunit I</fullName>
    </alternativeName>
</protein>
<dbReference type="EC" id="7.1.1.-" evidence="1"/>
<dbReference type="EMBL" id="CP000036">
    <property type="protein sequence ID" value="ABB66878.1"/>
    <property type="molecule type" value="Genomic_DNA"/>
</dbReference>
<dbReference type="RefSeq" id="WP_000172749.1">
    <property type="nucleotide sequence ID" value="NC_007613.1"/>
</dbReference>
<dbReference type="SMR" id="Q31YI0"/>
<dbReference type="GeneID" id="89517116"/>
<dbReference type="KEGG" id="sbo:SBO_2314"/>
<dbReference type="HOGENOM" id="CLU_067218_4_3_6"/>
<dbReference type="Proteomes" id="UP000007067">
    <property type="component" value="Chromosome"/>
</dbReference>
<dbReference type="GO" id="GO:0005886">
    <property type="term" value="C:plasma membrane"/>
    <property type="evidence" value="ECO:0007669"/>
    <property type="project" value="UniProtKB-SubCell"/>
</dbReference>
<dbReference type="GO" id="GO:0051539">
    <property type="term" value="F:4 iron, 4 sulfur cluster binding"/>
    <property type="evidence" value="ECO:0007669"/>
    <property type="project" value="UniProtKB-KW"/>
</dbReference>
<dbReference type="GO" id="GO:0005506">
    <property type="term" value="F:iron ion binding"/>
    <property type="evidence" value="ECO:0007669"/>
    <property type="project" value="UniProtKB-UniRule"/>
</dbReference>
<dbReference type="GO" id="GO:0050136">
    <property type="term" value="F:NADH:ubiquinone reductase (non-electrogenic) activity"/>
    <property type="evidence" value="ECO:0007669"/>
    <property type="project" value="UniProtKB-UniRule"/>
</dbReference>
<dbReference type="GO" id="GO:0048038">
    <property type="term" value="F:quinone binding"/>
    <property type="evidence" value="ECO:0007669"/>
    <property type="project" value="UniProtKB-KW"/>
</dbReference>
<dbReference type="GO" id="GO:0009060">
    <property type="term" value="P:aerobic respiration"/>
    <property type="evidence" value="ECO:0007669"/>
    <property type="project" value="TreeGrafter"/>
</dbReference>
<dbReference type="FunFam" id="3.30.70.3270:FF:000002">
    <property type="entry name" value="NADH-quinone oxidoreductase subunit I"/>
    <property type="match status" value="1"/>
</dbReference>
<dbReference type="Gene3D" id="3.30.70.3270">
    <property type="match status" value="1"/>
</dbReference>
<dbReference type="HAMAP" id="MF_01351">
    <property type="entry name" value="NDH1_NuoI"/>
    <property type="match status" value="1"/>
</dbReference>
<dbReference type="InterPro" id="IPR017896">
    <property type="entry name" value="4Fe4S_Fe-S-bd"/>
</dbReference>
<dbReference type="InterPro" id="IPR017900">
    <property type="entry name" value="4Fe4S_Fe_S_CS"/>
</dbReference>
<dbReference type="InterPro" id="IPR010226">
    <property type="entry name" value="NADH_quinone_OxRdtase_chainI"/>
</dbReference>
<dbReference type="NCBIfam" id="TIGR01971">
    <property type="entry name" value="NuoI"/>
    <property type="match status" value="1"/>
</dbReference>
<dbReference type="NCBIfam" id="NF004536">
    <property type="entry name" value="PRK05888.1-1"/>
    <property type="match status" value="1"/>
</dbReference>
<dbReference type="PANTHER" id="PTHR10849:SF20">
    <property type="entry name" value="NADH DEHYDROGENASE [UBIQUINONE] IRON-SULFUR PROTEIN 8, MITOCHONDRIAL"/>
    <property type="match status" value="1"/>
</dbReference>
<dbReference type="PANTHER" id="PTHR10849">
    <property type="entry name" value="NADH DEHYDROGENASE UBIQUINONE IRON-SULFUR PROTEIN 8, MITOCHONDRIAL"/>
    <property type="match status" value="1"/>
</dbReference>
<dbReference type="Pfam" id="PF12838">
    <property type="entry name" value="Fer4_7"/>
    <property type="match status" value="1"/>
</dbReference>
<dbReference type="SUPFAM" id="SSF54862">
    <property type="entry name" value="4Fe-4S ferredoxins"/>
    <property type="match status" value="1"/>
</dbReference>
<dbReference type="PROSITE" id="PS00198">
    <property type="entry name" value="4FE4S_FER_1"/>
    <property type="match status" value="2"/>
</dbReference>
<dbReference type="PROSITE" id="PS51379">
    <property type="entry name" value="4FE4S_FER_2"/>
    <property type="match status" value="2"/>
</dbReference>
<evidence type="ECO:0000255" key="1">
    <source>
        <dbReference type="HAMAP-Rule" id="MF_01351"/>
    </source>
</evidence>
<accession>Q31YI0</accession>
<organism>
    <name type="scientific">Shigella boydii serotype 4 (strain Sb227)</name>
    <dbReference type="NCBI Taxonomy" id="300268"/>
    <lineage>
        <taxon>Bacteria</taxon>
        <taxon>Pseudomonadati</taxon>
        <taxon>Pseudomonadota</taxon>
        <taxon>Gammaproteobacteria</taxon>
        <taxon>Enterobacterales</taxon>
        <taxon>Enterobacteriaceae</taxon>
        <taxon>Shigella</taxon>
    </lineage>
</organism>
<keyword id="KW-0004">4Fe-4S</keyword>
<keyword id="KW-0997">Cell inner membrane</keyword>
<keyword id="KW-1003">Cell membrane</keyword>
<keyword id="KW-0408">Iron</keyword>
<keyword id="KW-0411">Iron-sulfur</keyword>
<keyword id="KW-0472">Membrane</keyword>
<keyword id="KW-0479">Metal-binding</keyword>
<keyword id="KW-0520">NAD</keyword>
<keyword id="KW-0874">Quinone</keyword>
<keyword id="KW-0677">Repeat</keyword>
<keyword id="KW-1278">Translocase</keyword>
<keyword id="KW-0830">Ubiquinone</keyword>
<comment type="function">
    <text evidence="1">NDH-1 shuttles electrons from NADH, via FMN and iron-sulfur (Fe-S) centers, to quinones in the respiratory chain. The immediate electron acceptor for the enzyme in this species is believed to be ubiquinone. Couples the redox reaction to proton translocation (for every two electrons transferred, four hydrogen ions are translocated across the cytoplasmic membrane), and thus conserves the redox energy in a proton gradient.</text>
</comment>
<comment type="catalytic activity">
    <reaction evidence="1">
        <text>a quinone + NADH + 5 H(+)(in) = a quinol + NAD(+) + 4 H(+)(out)</text>
        <dbReference type="Rhea" id="RHEA:57888"/>
        <dbReference type="ChEBI" id="CHEBI:15378"/>
        <dbReference type="ChEBI" id="CHEBI:24646"/>
        <dbReference type="ChEBI" id="CHEBI:57540"/>
        <dbReference type="ChEBI" id="CHEBI:57945"/>
        <dbReference type="ChEBI" id="CHEBI:132124"/>
    </reaction>
</comment>
<comment type="cofactor">
    <cofactor evidence="1">
        <name>[4Fe-4S] cluster</name>
        <dbReference type="ChEBI" id="CHEBI:49883"/>
    </cofactor>
    <text evidence="1">Binds 2 [4Fe-4S] clusters per subunit.</text>
</comment>
<comment type="subunit">
    <text evidence="1">NDH-1 is composed of 13 different subunits. Subunits NuoA, H, J, K, L, M, N constitute the membrane sector of the complex.</text>
</comment>
<comment type="subcellular location">
    <subcellularLocation>
        <location evidence="1">Cell inner membrane</location>
        <topology evidence="1">Peripheral membrane protein</topology>
    </subcellularLocation>
</comment>
<comment type="similarity">
    <text evidence="1">Belongs to the complex I 23 kDa subunit family.</text>
</comment>
<feature type="chain" id="PRO_0000245746" description="NADH-quinone oxidoreductase subunit I">
    <location>
        <begin position="1"/>
        <end position="180"/>
    </location>
</feature>
<feature type="domain" description="4Fe-4S ferredoxin-type 1" evidence="1">
    <location>
        <begin position="50"/>
        <end position="80"/>
    </location>
</feature>
<feature type="domain" description="4Fe-4S ferredoxin-type 2" evidence="1">
    <location>
        <begin position="90"/>
        <end position="119"/>
    </location>
</feature>
<feature type="binding site" evidence="1">
    <location>
        <position position="60"/>
    </location>
    <ligand>
        <name>[4Fe-4S] cluster</name>
        <dbReference type="ChEBI" id="CHEBI:49883"/>
        <label>1</label>
    </ligand>
</feature>
<feature type="binding site" evidence="1">
    <location>
        <position position="63"/>
    </location>
    <ligand>
        <name>[4Fe-4S] cluster</name>
        <dbReference type="ChEBI" id="CHEBI:49883"/>
        <label>1</label>
    </ligand>
</feature>
<feature type="binding site" evidence="1">
    <location>
        <position position="66"/>
    </location>
    <ligand>
        <name>[4Fe-4S] cluster</name>
        <dbReference type="ChEBI" id="CHEBI:49883"/>
        <label>1</label>
    </ligand>
</feature>
<feature type="binding site" evidence="1">
    <location>
        <position position="70"/>
    </location>
    <ligand>
        <name>[4Fe-4S] cluster</name>
        <dbReference type="ChEBI" id="CHEBI:49883"/>
        <label>2</label>
    </ligand>
</feature>
<feature type="binding site" evidence="1">
    <location>
        <position position="99"/>
    </location>
    <ligand>
        <name>[4Fe-4S] cluster</name>
        <dbReference type="ChEBI" id="CHEBI:49883"/>
        <label>2</label>
    </ligand>
</feature>
<feature type="binding site" evidence="1">
    <location>
        <position position="102"/>
    </location>
    <ligand>
        <name>[4Fe-4S] cluster</name>
        <dbReference type="ChEBI" id="CHEBI:49883"/>
        <label>2</label>
    </ligand>
</feature>
<feature type="binding site" evidence="1">
    <location>
        <position position="105"/>
    </location>
    <ligand>
        <name>[4Fe-4S] cluster</name>
        <dbReference type="ChEBI" id="CHEBI:49883"/>
        <label>2</label>
    </ligand>
</feature>
<feature type="binding site" evidence="1">
    <location>
        <position position="109"/>
    </location>
    <ligand>
        <name>[4Fe-4S] cluster</name>
        <dbReference type="ChEBI" id="CHEBI:49883"/>
        <label>1</label>
    </ligand>
</feature>
<gene>
    <name evidence="1" type="primary">nuoI</name>
    <name type="ordered locus">SBO_2314</name>
</gene>
<name>NUOI_SHIBS</name>